<keyword id="KW-0333">Golgi apparatus</keyword>
<keyword id="KW-0472">Membrane</keyword>
<keyword id="KW-1185">Reference proteome</keyword>
<keyword id="KW-0732">Signal</keyword>
<keyword id="KW-0812">Transmembrane</keyword>
<keyword id="KW-1133">Transmembrane helix</keyword>
<reference key="1">
    <citation type="journal article" date="2005" name="Science">
        <title>The transcriptional landscape of the mammalian genome.</title>
        <authorList>
            <person name="Carninci P."/>
            <person name="Kasukawa T."/>
            <person name="Katayama S."/>
            <person name="Gough J."/>
            <person name="Frith M.C."/>
            <person name="Maeda N."/>
            <person name="Oyama R."/>
            <person name="Ravasi T."/>
            <person name="Lenhard B."/>
            <person name="Wells C."/>
            <person name="Kodzius R."/>
            <person name="Shimokawa K."/>
            <person name="Bajic V.B."/>
            <person name="Brenner S.E."/>
            <person name="Batalov S."/>
            <person name="Forrest A.R."/>
            <person name="Zavolan M."/>
            <person name="Davis M.J."/>
            <person name="Wilming L.G."/>
            <person name="Aidinis V."/>
            <person name="Allen J.E."/>
            <person name="Ambesi-Impiombato A."/>
            <person name="Apweiler R."/>
            <person name="Aturaliya R.N."/>
            <person name="Bailey T.L."/>
            <person name="Bansal M."/>
            <person name="Baxter L."/>
            <person name="Beisel K.W."/>
            <person name="Bersano T."/>
            <person name="Bono H."/>
            <person name="Chalk A.M."/>
            <person name="Chiu K.P."/>
            <person name="Choudhary V."/>
            <person name="Christoffels A."/>
            <person name="Clutterbuck D.R."/>
            <person name="Crowe M.L."/>
            <person name="Dalla E."/>
            <person name="Dalrymple B.P."/>
            <person name="de Bono B."/>
            <person name="Della Gatta G."/>
            <person name="di Bernardo D."/>
            <person name="Down T."/>
            <person name="Engstrom P."/>
            <person name="Fagiolini M."/>
            <person name="Faulkner G."/>
            <person name="Fletcher C.F."/>
            <person name="Fukushima T."/>
            <person name="Furuno M."/>
            <person name="Futaki S."/>
            <person name="Gariboldi M."/>
            <person name="Georgii-Hemming P."/>
            <person name="Gingeras T.R."/>
            <person name="Gojobori T."/>
            <person name="Green R.E."/>
            <person name="Gustincich S."/>
            <person name="Harbers M."/>
            <person name="Hayashi Y."/>
            <person name="Hensch T.K."/>
            <person name="Hirokawa N."/>
            <person name="Hill D."/>
            <person name="Huminiecki L."/>
            <person name="Iacono M."/>
            <person name="Ikeo K."/>
            <person name="Iwama A."/>
            <person name="Ishikawa T."/>
            <person name="Jakt M."/>
            <person name="Kanapin A."/>
            <person name="Katoh M."/>
            <person name="Kawasawa Y."/>
            <person name="Kelso J."/>
            <person name="Kitamura H."/>
            <person name="Kitano H."/>
            <person name="Kollias G."/>
            <person name="Krishnan S.P."/>
            <person name="Kruger A."/>
            <person name="Kummerfeld S.K."/>
            <person name="Kurochkin I.V."/>
            <person name="Lareau L.F."/>
            <person name="Lazarevic D."/>
            <person name="Lipovich L."/>
            <person name="Liu J."/>
            <person name="Liuni S."/>
            <person name="McWilliam S."/>
            <person name="Madan Babu M."/>
            <person name="Madera M."/>
            <person name="Marchionni L."/>
            <person name="Matsuda H."/>
            <person name="Matsuzawa S."/>
            <person name="Miki H."/>
            <person name="Mignone F."/>
            <person name="Miyake S."/>
            <person name="Morris K."/>
            <person name="Mottagui-Tabar S."/>
            <person name="Mulder N."/>
            <person name="Nakano N."/>
            <person name="Nakauchi H."/>
            <person name="Ng P."/>
            <person name="Nilsson R."/>
            <person name="Nishiguchi S."/>
            <person name="Nishikawa S."/>
            <person name="Nori F."/>
            <person name="Ohara O."/>
            <person name="Okazaki Y."/>
            <person name="Orlando V."/>
            <person name="Pang K.C."/>
            <person name="Pavan W.J."/>
            <person name="Pavesi G."/>
            <person name="Pesole G."/>
            <person name="Petrovsky N."/>
            <person name="Piazza S."/>
            <person name="Reed J."/>
            <person name="Reid J.F."/>
            <person name="Ring B.Z."/>
            <person name="Ringwald M."/>
            <person name="Rost B."/>
            <person name="Ruan Y."/>
            <person name="Salzberg S.L."/>
            <person name="Sandelin A."/>
            <person name="Schneider C."/>
            <person name="Schoenbach C."/>
            <person name="Sekiguchi K."/>
            <person name="Semple C.A."/>
            <person name="Seno S."/>
            <person name="Sessa L."/>
            <person name="Sheng Y."/>
            <person name="Shibata Y."/>
            <person name="Shimada H."/>
            <person name="Shimada K."/>
            <person name="Silva D."/>
            <person name="Sinclair B."/>
            <person name="Sperling S."/>
            <person name="Stupka E."/>
            <person name="Sugiura K."/>
            <person name="Sultana R."/>
            <person name="Takenaka Y."/>
            <person name="Taki K."/>
            <person name="Tammoja K."/>
            <person name="Tan S.L."/>
            <person name="Tang S."/>
            <person name="Taylor M.S."/>
            <person name="Tegner J."/>
            <person name="Teichmann S.A."/>
            <person name="Ueda H.R."/>
            <person name="van Nimwegen E."/>
            <person name="Verardo R."/>
            <person name="Wei C.L."/>
            <person name="Yagi K."/>
            <person name="Yamanishi H."/>
            <person name="Zabarovsky E."/>
            <person name="Zhu S."/>
            <person name="Zimmer A."/>
            <person name="Hide W."/>
            <person name="Bult C."/>
            <person name="Grimmond S.M."/>
            <person name="Teasdale R.D."/>
            <person name="Liu E.T."/>
            <person name="Brusic V."/>
            <person name="Quackenbush J."/>
            <person name="Wahlestedt C."/>
            <person name="Mattick J.S."/>
            <person name="Hume D.A."/>
            <person name="Kai C."/>
            <person name="Sasaki D."/>
            <person name="Tomaru Y."/>
            <person name="Fukuda S."/>
            <person name="Kanamori-Katayama M."/>
            <person name="Suzuki M."/>
            <person name="Aoki J."/>
            <person name="Arakawa T."/>
            <person name="Iida J."/>
            <person name="Imamura K."/>
            <person name="Itoh M."/>
            <person name="Kato T."/>
            <person name="Kawaji H."/>
            <person name="Kawagashira N."/>
            <person name="Kawashima T."/>
            <person name="Kojima M."/>
            <person name="Kondo S."/>
            <person name="Konno H."/>
            <person name="Nakano K."/>
            <person name="Ninomiya N."/>
            <person name="Nishio T."/>
            <person name="Okada M."/>
            <person name="Plessy C."/>
            <person name="Shibata K."/>
            <person name="Shiraki T."/>
            <person name="Suzuki S."/>
            <person name="Tagami M."/>
            <person name="Waki K."/>
            <person name="Watahiki A."/>
            <person name="Okamura-Oho Y."/>
            <person name="Suzuki H."/>
            <person name="Kawai J."/>
            <person name="Hayashizaki Y."/>
        </authorList>
    </citation>
    <scope>NUCLEOTIDE SEQUENCE [LARGE SCALE MRNA]</scope>
    <source>
        <strain>C57BL/6J</strain>
        <strain>NOD</strain>
        <tissue>Adipose tissue</tissue>
        <tissue>Small intestine</tissue>
    </source>
</reference>
<reference key="2">
    <citation type="journal article" date="2004" name="Genome Res.">
        <title>The status, quality, and expansion of the NIH full-length cDNA project: the Mammalian Gene Collection (MGC).</title>
        <authorList>
            <consortium name="The MGC Project Team"/>
        </authorList>
    </citation>
    <scope>NUCLEOTIDE SEQUENCE [LARGE SCALE MRNA]</scope>
    <source>
        <strain>C57BL/6J</strain>
        <strain>Czech II</strain>
        <tissue>Brain</tissue>
        <tissue>Mammary gland</tissue>
    </source>
</reference>
<sequence length="74" mass="8308">MTNVYSLDGILVFGLLFVCTCAYFKKVPRLKTWLLSEKKGVWGVFYKAAVIGTRLHAAVAIACIVMAFYVLFIK</sequence>
<organism>
    <name type="scientific">Mus musculus</name>
    <name type="common">Mouse</name>
    <dbReference type="NCBI Taxonomy" id="10090"/>
    <lineage>
        <taxon>Eukaryota</taxon>
        <taxon>Metazoa</taxon>
        <taxon>Chordata</taxon>
        <taxon>Craniata</taxon>
        <taxon>Vertebrata</taxon>
        <taxon>Euteleostomi</taxon>
        <taxon>Mammalia</taxon>
        <taxon>Eutheria</taxon>
        <taxon>Euarchontoglires</taxon>
        <taxon>Glires</taxon>
        <taxon>Rodentia</taxon>
        <taxon>Myomorpha</taxon>
        <taxon>Muroidea</taxon>
        <taxon>Muridae</taxon>
        <taxon>Murinae</taxon>
        <taxon>Mus</taxon>
        <taxon>Mus</taxon>
    </lineage>
</organism>
<comment type="function">
    <text evidence="1">Involved in the early part of the secretory pathway.</text>
</comment>
<comment type="subcellular location">
    <subcellularLocation>
        <location evidence="1">Golgi apparatus membrane</location>
        <topology evidence="1">Single-pass type I membrane protein</topology>
    </subcellularLocation>
</comment>
<comment type="similarity">
    <text evidence="3">Belongs to the KISH family.</text>
</comment>
<gene>
    <name type="primary">Tmem167b</name>
</gene>
<accession>Q80X45</accession>
<accession>Q3U299</accession>
<accession>Q8BL15</accession>
<accession>Q9D863</accession>
<dbReference type="EMBL" id="AK008415">
    <property type="protein sequence ID" value="BAB25656.1"/>
    <property type="molecule type" value="mRNA"/>
</dbReference>
<dbReference type="EMBL" id="AK046697">
    <property type="protein sequence ID" value="BAC32839.1"/>
    <property type="molecule type" value="mRNA"/>
</dbReference>
<dbReference type="EMBL" id="AK155399">
    <property type="protein sequence ID" value="BAE33243.1"/>
    <property type="molecule type" value="mRNA"/>
</dbReference>
<dbReference type="EMBL" id="BC050932">
    <property type="protein sequence ID" value="AAH50932.1"/>
    <property type="molecule type" value="mRNA"/>
</dbReference>
<dbReference type="EMBL" id="BC055449">
    <property type="protein sequence ID" value="AAH55449.1"/>
    <property type="molecule type" value="mRNA"/>
</dbReference>
<dbReference type="CCDS" id="CCDS38601.1"/>
<dbReference type="RefSeq" id="NP_080474.2">
    <property type="nucleotide sequence ID" value="NM_026198.2"/>
</dbReference>
<dbReference type="FunCoup" id="Q80X45">
    <property type="interactions" value="1772"/>
</dbReference>
<dbReference type="STRING" id="10090.ENSMUSP00000088035"/>
<dbReference type="PhosphoSitePlus" id="Q80X45"/>
<dbReference type="PaxDb" id="10090-ENSMUSP00000088035"/>
<dbReference type="ProteomicsDB" id="264997"/>
<dbReference type="Pumba" id="Q80X45"/>
<dbReference type="Ensembl" id="ENSMUST00000090546.6">
    <property type="protein sequence ID" value="ENSMUSP00000088035.6"/>
    <property type="gene ID" value="ENSMUSG00000068732.6"/>
</dbReference>
<dbReference type="GeneID" id="67495"/>
<dbReference type="KEGG" id="mmu:67495"/>
<dbReference type="UCSC" id="uc008qzg.2">
    <property type="organism name" value="mouse"/>
</dbReference>
<dbReference type="AGR" id="MGI:1914745"/>
<dbReference type="CTD" id="56900"/>
<dbReference type="MGI" id="MGI:1914745">
    <property type="gene designation" value="Tmem167b"/>
</dbReference>
<dbReference type="VEuPathDB" id="HostDB:ENSMUSG00000068732"/>
<dbReference type="eggNOG" id="KOG3808">
    <property type="taxonomic scope" value="Eukaryota"/>
</dbReference>
<dbReference type="GeneTree" id="ENSGT00690000103864"/>
<dbReference type="HOGENOM" id="CLU_152663_1_2_1"/>
<dbReference type="InParanoid" id="Q80X45"/>
<dbReference type="OMA" id="IVMAFYI"/>
<dbReference type="OrthoDB" id="8945at9989"/>
<dbReference type="TreeFam" id="TF300138"/>
<dbReference type="BioGRID-ORCS" id="67495">
    <property type="hits" value="1 hit in 77 CRISPR screens"/>
</dbReference>
<dbReference type="ChiTaRS" id="Tmem167b">
    <property type="organism name" value="mouse"/>
</dbReference>
<dbReference type="PRO" id="PR:Q80X45"/>
<dbReference type="Proteomes" id="UP000000589">
    <property type="component" value="Chromosome 3"/>
</dbReference>
<dbReference type="RNAct" id="Q80X45">
    <property type="molecule type" value="protein"/>
</dbReference>
<dbReference type="Bgee" id="ENSMUSG00000068732">
    <property type="expression patterns" value="Expressed in lumbar dorsal root ganglion and 214 other cell types or tissues"/>
</dbReference>
<dbReference type="ExpressionAtlas" id="Q80X45">
    <property type="expression patterns" value="baseline and differential"/>
</dbReference>
<dbReference type="GO" id="GO:0000139">
    <property type="term" value="C:Golgi membrane"/>
    <property type="evidence" value="ECO:0007669"/>
    <property type="project" value="UniProtKB-SubCell"/>
</dbReference>
<dbReference type="InterPro" id="IPR042863">
    <property type="entry name" value="Kish-B"/>
</dbReference>
<dbReference type="InterPro" id="IPR009653">
    <property type="entry name" value="Ksh1"/>
</dbReference>
<dbReference type="PANTHER" id="PTHR46815">
    <property type="entry name" value="PROTEIN KISH-B"/>
    <property type="match status" value="1"/>
</dbReference>
<dbReference type="PANTHER" id="PTHR46815:SF1">
    <property type="entry name" value="PROTEIN KISH-B"/>
    <property type="match status" value="1"/>
</dbReference>
<dbReference type="Pfam" id="PF06842">
    <property type="entry name" value="DUF1242"/>
    <property type="match status" value="1"/>
</dbReference>
<protein>
    <recommendedName>
        <fullName>Protein kish-B</fullName>
    </recommendedName>
    <alternativeName>
        <fullName>Transmembrane protein 167B</fullName>
    </alternativeName>
</protein>
<evidence type="ECO:0000250" key="1"/>
<evidence type="ECO:0000255" key="2"/>
<evidence type="ECO:0000305" key="3"/>
<proteinExistence type="inferred from homology"/>
<feature type="signal peptide" evidence="2">
    <location>
        <begin position="1"/>
        <end position="22"/>
    </location>
</feature>
<feature type="chain" id="PRO_0000265082" description="Protein kish-B">
    <location>
        <begin position="23"/>
        <end position="74"/>
    </location>
</feature>
<feature type="topological domain" description="Extracellular" evidence="2">
    <location>
        <begin position="23"/>
        <end position="52"/>
    </location>
</feature>
<feature type="transmembrane region" description="Helical" evidence="2">
    <location>
        <begin position="53"/>
        <end position="73"/>
    </location>
</feature>
<feature type="topological domain" description="Cytoplasmic" evidence="2">
    <location>
        <position position="74"/>
    </location>
</feature>
<feature type="sequence conflict" description="In Ref. 1; BAC32839." evidence="3" ref="1">
    <original>A</original>
    <variation>T</variation>
    <location>
        <position position="62"/>
    </location>
</feature>
<feature type="sequence conflict" description="In Ref. 1; BAB25656." evidence="3" ref="1">
    <original>I</original>
    <variation>N</variation>
    <location>
        <position position="73"/>
    </location>
</feature>
<name>KISHB_MOUSE</name>